<evidence type="ECO:0000255" key="1">
    <source>
        <dbReference type="HAMAP-Rule" id="MF_01846"/>
    </source>
</evidence>
<keyword id="KW-0378">Hydrolase</keyword>
<keyword id="KW-0460">Magnesium</keyword>
<comment type="function">
    <text evidence="1">Catalyzes the hydrolysis of nucleoside triphosphates, with a preference for pyrimidine deoxynucleoside triphosphates (dUTP, dTTP and dCTP).</text>
</comment>
<comment type="catalytic activity">
    <reaction evidence="1">
        <text>a ribonucleoside 5'-triphosphate + H2O = a ribonucleoside 5'-phosphate + diphosphate + H(+)</text>
        <dbReference type="Rhea" id="RHEA:23996"/>
        <dbReference type="ChEBI" id="CHEBI:15377"/>
        <dbReference type="ChEBI" id="CHEBI:15378"/>
        <dbReference type="ChEBI" id="CHEBI:33019"/>
        <dbReference type="ChEBI" id="CHEBI:58043"/>
        <dbReference type="ChEBI" id="CHEBI:61557"/>
        <dbReference type="EC" id="3.6.1.9"/>
    </reaction>
</comment>
<comment type="catalytic activity">
    <reaction evidence="1">
        <text>a 2'-deoxyribonucleoside 5'-triphosphate + H2O = a 2'-deoxyribonucleoside 5'-phosphate + diphosphate + H(+)</text>
        <dbReference type="Rhea" id="RHEA:44644"/>
        <dbReference type="ChEBI" id="CHEBI:15377"/>
        <dbReference type="ChEBI" id="CHEBI:15378"/>
        <dbReference type="ChEBI" id="CHEBI:33019"/>
        <dbReference type="ChEBI" id="CHEBI:61560"/>
        <dbReference type="ChEBI" id="CHEBI:65317"/>
        <dbReference type="EC" id="3.6.1.9"/>
    </reaction>
</comment>
<comment type="catalytic activity">
    <reaction evidence="1">
        <text>dUTP + H2O = dUMP + diphosphate + H(+)</text>
        <dbReference type="Rhea" id="RHEA:10248"/>
        <dbReference type="ChEBI" id="CHEBI:15377"/>
        <dbReference type="ChEBI" id="CHEBI:15378"/>
        <dbReference type="ChEBI" id="CHEBI:33019"/>
        <dbReference type="ChEBI" id="CHEBI:61555"/>
        <dbReference type="ChEBI" id="CHEBI:246422"/>
        <dbReference type="EC" id="3.6.1.9"/>
    </reaction>
</comment>
<comment type="catalytic activity">
    <reaction evidence="1">
        <text>dUTP + H2O = dUMP + diphosphate + H(+)</text>
        <dbReference type="Rhea" id="RHEA:10248"/>
        <dbReference type="ChEBI" id="CHEBI:15377"/>
        <dbReference type="ChEBI" id="CHEBI:15378"/>
        <dbReference type="ChEBI" id="CHEBI:33019"/>
        <dbReference type="ChEBI" id="CHEBI:61555"/>
        <dbReference type="ChEBI" id="CHEBI:246422"/>
        <dbReference type="EC" id="3.6.1.23"/>
    </reaction>
</comment>
<comment type="catalytic activity">
    <reaction evidence="1">
        <text>dTTP + H2O = dTMP + diphosphate + H(+)</text>
        <dbReference type="Rhea" id="RHEA:28534"/>
        <dbReference type="ChEBI" id="CHEBI:15377"/>
        <dbReference type="ChEBI" id="CHEBI:15378"/>
        <dbReference type="ChEBI" id="CHEBI:33019"/>
        <dbReference type="ChEBI" id="CHEBI:37568"/>
        <dbReference type="ChEBI" id="CHEBI:63528"/>
        <dbReference type="EC" id="3.6.1.9"/>
    </reaction>
</comment>
<comment type="catalytic activity">
    <reaction evidence="1">
        <text>dCTP + H2O = dCMP + diphosphate + H(+)</text>
        <dbReference type="Rhea" id="RHEA:22636"/>
        <dbReference type="ChEBI" id="CHEBI:15377"/>
        <dbReference type="ChEBI" id="CHEBI:15378"/>
        <dbReference type="ChEBI" id="CHEBI:33019"/>
        <dbReference type="ChEBI" id="CHEBI:57566"/>
        <dbReference type="ChEBI" id="CHEBI:61481"/>
        <dbReference type="EC" id="3.6.1.9"/>
    </reaction>
</comment>
<comment type="catalytic activity">
    <reaction evidence="1">
        <text>dCTP + H2O = dCMP + diphosphate + H(+)</text>
        <dbReference type="Rhea" id="RHEA:22636"/>
        <dbReference type="ChEBI" id="CHEBI:15377"/>
        <dbReference type="ChEBI" id="CHEBI:15378"/>
        <dbReference type="ChEBI" id="CHEBI:33019"/>
        <dbReference type="ChEBI" id="CHEBI:57566"/>
        <dbReference type="ChEBI" id="CHEBI:61481"/>
        <dbReference type="EC" id="3.6.1.12"/>
    </reaction>
</comment>
<comment type="cofactor">
    <cofactor evidence="1">
        <name>Mg(2+)</name>
        <dbReference type="ChEBI" id="CHEBI:18420"/>
    </cofactor>
</comment>
<comment type="subunit">
    <text evidence="1">Monomer.</text>
</comment>
<comment type="similarity">
    <text evidence="1">Belongs to the Nudix hydrolase family. NudI subfamily.</text>
</comment>
<feature type="chain" id="PRO_1000188482" description="Nucleoside triphosphatase NudI">
    <location>
        <begin position="1"/>
        <end position="141"/>
    </location>
</feature>
<feature type="domain" description="Nudix hydrolase" evidence="1">
    <location>
        <begin position="1"/>
        <end position="141"/>
    </location>
</feature>
<feature type="short sequence motif" description="Nudix box">
    <location>
        <begin position="38"/>
        <end position="59"/>
    </location>
</feature>
<organism>
    <name type="scientific">Escherichia coli O17:K52:H18 (strain UMN026 / ExPEC)</name>
    <dbReference type="NCBI Taxonomy" id="585056"/>
    <lineage>
        <taxon>Bacteria</taxon>
        <taxon>Pseudomonadati</taxon>
        <taxon>Pseudomonadota</taxon>
        <taxon>Gammaproteobacteria</taxon>
        <taxon>Enterobacterales</taxon>
        <taxon>Enterobacteriaceae</taxon>
        <taxon>Escherichia</taxon>
    </lineage>
</organism>
<gene>
    <name evidence="1" type="primary">nudI</name>
    <name type="ordered locus">ECUMN_2592</name>
</gene>
<reference key="1">
    <citation type="journal article" date="2009" name="PLoS Genet.">
        <title>Organised genome dynamics in the Escherichia coli species results in highly diverse adaptive paths.</title>
        <authorList>
            <person name="Touchon M."/>
            <person name="Hoede C."/>
            <person name="Tenaillon O."/>
            <person name="Barbe V."/>
            <person name="Baeriswyl S."/>
            <person name="Bidet P."/>
            <person name="Bingen E."/>
            <person name="Bonacorsi S."/>
            <person name="Bouchier C."/>
            <person name="Bouvet O."/>
            <person name="Calteau A."/>
            <person name="Chiapello H."/>
            <person name="Clermont O."/>
            <person name="Cruveiller S."/>
            <person name="Danchin A."/>
            <person name="Diard M."/>
            <person name="Dossat C."/>
            <person name="Karoui M.E."/>
            <person name="Frapy E."/>
            <person name="Garry L."/>
            <person name="Ghigo J.M."/>
            <person name="Gilles A.M."/>
            <person name="Johnson J."/>
            <person name="Le Bouguenec C."/>
            <person name="Lescat M."/>
            <person name="Mangenot S."/>
            <person name="Martinez-Jehanne V."/>
            <person name="Matic I."/>
            <person name="Nassif X."/>
            <person name="Oztas S."/>
            <person name="Petit M.A."/>
            <person name="Pichon C."/>
            <person name="Rouy Z."/>
            <person name="Ruf C.S."/>
            <person name="Schneider D."/>
            <person name="Tourret J."/>
            <person name="Vacherie B."/>
            <person name="Vallenet D."/>
            <person name="Medigue C."/>
            <person name="Rocha E.P.C."/>
            <person name="Denamur E."/>
        </authorList>
    </citation>
    <scope>NUCLEOTIDE SEQUENCE [LARGE SCALE GENOMIC DNA]</scope>
    <source>
        <strain>UMN026 / ExPEC</strain>
    </source>
</reference>
<name>NUDI_ECOLU</name>
<sequence length="141" mass="16359">MRQRTIVCPLIQNDGAYLLCKMADDRGVFPGQWALSGGGVEPGERIEEALRREIREELGEQLLLTEITPWTFSDDIRTKTYADGRKEEIYMIYLTFDCVSANREVKINEEFQDYAWVKPEDLVHYDLNVATRKTLRLKGLL</sequence>
<protein>
    <recommendedName>
        <fullName evidence="1">Nucleoside triphosphatase NudI</fullName>
        <ecNumber evidence="1">3.6.1.9</ecNumber>
    </recommendedName>
    <alternativeName>
        <fullName evidence="1">Nucleotide diphosphatase NudI</fullName>
    </alternativeName>
    <alternativeName>
        <fullName evidence="1">Pyrimidine deoxynucleoside triphosphate diphosphatase</fullName>
    </alternativeName>
    <alternativeName>
        <fullName evidence="1">dCTP diphosphatase</fullName>
        <ecNumber evidence="1">3.6.1.12</ecNumber>
    </alternativeName>
    <alternativeName>
        <fullName evidence="1">dTTP diphosphatase</fullName>
        <ecNumber evidence="1">3.6.1.-</ecNumber>
    </alternativeName>
    <alternativeName>
        <fullName evidence="1">dUTP diphosphatase</fullName>
        <ecNumber evidence="1">3.6.1.23</ecNumber>
    </alternativeName>
</protein>
<proteinExistence type="inferred from homology"/>
<accession>B7N5L6</accession>
<dbReference type="EC" id="3.6.1.9" evidence="1"/>
<dbReference type="EC" id="3.6.1.12" evidence="1"/>
<dbReference type="EC" id="3.6.1.-" evidence="1"/>
<dbReference type="EC" id="3.6.1.23" evidence="1"/>
<dbReference type="EMBL" id="CU928163">
    <property type="protein sequence ID" value="CAR13775.1"/>
    <property type="molecule type" value="Genomic_DNA"/>
</dbReference>
<dbReference type="RefSeq" id="WP_001306470.1">
    <property type="nucleotide sequence ID" value="NC_011751.1"/>
</dbReference>
<dbReference type="RefSeq" id="YP_002413303.1">
    <property type="nucleotide sequence ID" value="NC_011751.1"/>
</dbReference>
<dbReference type="SMR" id="B7N5L6"/>
<dbReference type="STRING" id="585056.ECUMN_2592"/>
<dbReference type="KEGG" id="eum:ECUMN_2592"/>
<dbReference type="PATRIC" id="fig|585056.7.peg.2773"/>
<dbReference type="HOGENOM" id="CLU_037162_31_0_6"/>
<dbReference type="Proteomes" id="UP000007097">
    <property type="component" value="Chromosome"/>
</dbReference>
<dbReference type="GO" id="GO:0047840">
    <property type="term" value="F:dCTP diphosphatase activity"/>
    <property type="evidence" value="ECO:0007669"/>
    <property type="project" value="UniProtKB-EC"/>
</dbReference>
<dbReference type="GO" id="GO:0036218">
    <property type="term" value="F:dTTP diphosphatase activity"/>
    <property type="evidence" value="ECO:0007669"/>
    <property type="project" value="RHEA"/>
</dbReference>
<dbReference type="GO" id="GO:0004170">
    <property type="term" value="F:dUTP diphosphatase activity"/>
    <property type="evidence" value="ECO:0007669"/>
    <property type="project" value="UniProtKB-EC"/>
</dbReference>
<dbReference type="GO" id="GO:0000287">
    <property type="term" value="F:magnesium ion binding"/>
    <property type="evidence" value="ECO:0007669"/>
    <property type="project" value="UniProtKB-UniRule"/>
</dbReference>
<dbReference type="Gene3D" id="3.90.79.10">
    <property type="entry name" value="Nucleoside Triphosphate Pyrophosphohydrolase"/>
    <property type="match status" value="1"/>
</dbReference>
<dbReference type="HAMAP" id="MF_01846">
    <property type="entry name" value="Nudix_NudI"/>
    <property type="match status" value="1"/>
</dbReference>
<dbReference type="InterPro" id="IPR023781">
    <property type="entry name" value="Nucleoside_triphosphatase_NudI"/>
</dbReference>
<dbReference type="InterPro" id="IPR020476">
    <property type="entry name" value="Nudix_hydrolase"/>
</dbReference>
<dbReference type="InterPro" id="IPR015797">
    <property type="entry name" value="NUDIX_hydrolase-like_dom_sf"/>
</dbReference>
<dbReference type="InterPro" id="IPR020084">
    <property type="entry name" value="NUDIX_hydrolase_CS"/>
</dbReference>
<dbReference type="InterPro" id="IPR000086">
    <property type="entry name" value="NUDIX_hydrolase_dom"/>
</dbReference>
<dbReference type="NCBIfam" id="NF012016">
    <property type="entry name" value="PRK15472.1"/>
    <property type="match status" value="1"/>
</dbReference>
<dbReference type="PANTHER" id="PTHR43046">
    <property type="entry name" value="GDP-MANNOSE MANNOSYL HYDROLASE"/>
    <property type="match status" value="1"/>
</dbReference>
<dbReference type="PANTHER" id="PTHR43046:SF12">
    <property type="entry name" value="GDP-MANNOSE MANNOSYL HYDROLASE"/>
    <property type="match status" value="1"/>
</dbReference>
<dbReference type="Pfam" id="PF00293">
    <property type="entry name" value="NUDIX"/>
    <property type="match status" value="1"/>
</dbReference>
<dbReference type="PRINTS" id="PR00502">
    <property type="entry name" value="NUDIXFAMILY"/>
</dbReference>
<dbReference type="SUPFAM" id="SSF55811">
    <property type="entry name" value="Nudix"/>
    <property type="match status" value="1"/>
</dbReference>
<dbReference type="PROSITE" id="PS51462">
    <property type="entry name" value="NUDIX"/>
    <property type="match status" value="1"/>
</dbReference>
<dbReference type="PROSITE" id="PS00893">
    <property type="entry name" value="NUDIX_BOX"/>
    <property type="match status" value="1"/>
</dbReference>